<reference key="1">
    <citation type="journal article" date="2000" name="Proc. Natl. Acad. Sci. U.S.A.">
        <title>Genome sequence of Halobacterium species NRC-1.</title>
        <authorList>
            <person name="Ng W.V."/>
            <person name="Kennedy S.P."/>
            <person name="Mahairas G.G."/>
            <person name="Berquist B."/>
            <person name="Pan M."/>
            <person name="Shukla H.D."/>
            <person name="Lasky S.R."/>
            <person name="Baliga N.S."/>
            <person name="Thorsson V."/>
            <person name="Sbrogna J."/>
            <person name="Swartzell S."/>
            <person name="Weir D."/>
            <person name="Hall J."/>
            <person name="Dahl T.A."/>
            <person name="Welti R."/>
            <person name="Goo Y.A."/>
            <person name="Leithauser B."/>
            <person name="Keller K."/>
            <person name="Cruz R."/>
            <person name="Danson M.J."/>
            <person name="Hough D.W."/>
            <person name="Maddocks D.G."/>
            <person name="Jablonski P.E."/>
            <person name="Krebs M.P."/>
            <person name="Angevine C.M."/>
            <person name="Dale H."/>
            <person name="Isenbarger T.A."/>
            <person name="Peck R.F."/>
            <person name="Pohlschroder M."/>
            <person name="Spudich J.L."/>
            <person name="Jung K.-H."/>
            <person name="Alam M."/>
            <person name="Freitas T."/>
            <person name="Hou S."/>
            <person name="Daniels C.J."/>
            <person name="Dennis P.P."/>
            <person name="Omer A.D."/>
            <person name="Ebhardt H."/>
            <person name="Lowe T.M."/>
            <person name="Liang P."/>
            <person name="Riley M."/>
            <person name="Hood L."/>
            <person name="DasSarma S."/>
        </authorList>
    </citation>
    <scope>NUCLEOTIDE SEQUENCE [LARGE SCALE GENOMIC DNA]</scope>
    <source>
        <strain>ATCC 700922 / JCM 11081 / NRC-1</strain>
    </source>
</reference>
<evidence type="ECO:0000255" key="1">
    <source>
        <dbReference type="HAMAP-Rule" id="MF_01366"/>
    </source>
</evidence>
<evidence type="ECO:0000305" key="2"/>
<protein>
    <recommendedName>
        <fullName evidence="1">Large ribosomal subunit protein uL13</fullName>
    </recommendedName>
    <alternativeName>
        <fullName evidence="2">50S ribosomal protein L13</fullName>
    </alternativeName>
</protein>
<comment type="function">
    <text evidence="1">This protein is one of the early assembly proteins of the 50S ribosomal subunit, although it is not seen to bind rRNA by itself. It is important during the early stages of 50S assembly.</text>
</comment>
<comment type="subunit">
    <text evidence="1">Part of the 50S ribosomal subunit.</text>
</comment>
<comment type="similarity">
    <text evidence="1">Belongs to the universal ribosomal protein uL13 family.</text>
</comment>
<dbReference type="EMBL" id="AE004437">
    <property type="protein sequence ID" value="AAG19522.1"/>
    <property type="molecule type" value="Genomic_DNA"/>
</dbReference>
<dbReference type="PIR" id="F84269">
    <property type="entry name" value="F84269"/>
</dbReference>
<dbReference type="RefSeq" id="WP_010902817.1">
    <property type="nucleotide sequence ID" value="NC_002607.1"/>
</dbReference>
<dbReference type="SMR" id="Q9HQJ3"/>
<dbReference type="FunCoup" id="Q9HQJ3">
    <property type="interactions" value="133"/>
</dbReference>
<dbReference type="STRING" id="64091.VNG_1138G"/>
<dbReference type="PaxDb" id="64091-VNG_1138G"/>
<dbReference type="KEGG" id="hal:VNG_1138G"/>
<dbReference type="PATRIC" id="fig|64091.14.peg.868"/>
<dbReference type="HOGENOM" id="CLU_076922_1_0_2"/>
<dbReference type="InParanoid" id="Q9HQJ3"/>
<dbReference type="OrthoDB" id="7668at2157"/>
<dbReference type="PhylomeDB" id="Q9HQJ3"/>
<dbReference type="Proteomes" id="UP000000554">
    <property type="component" value="Chromosome"/>
</dbReference>
<dbReference type="GO" id="GO:0022625">
    <property type="term" value="C:cytosolic large ribosomal subunit"/>
    <property type="evidence" value="ECO:0000318"/>
    <property type="project" value="GO_Central"/>
</dbReference>
<dbReference type="GO" id="GO:0005840">
    <property type="term" value="C:ribosome"/>
    <property type="evidence" value="ECO:0000318"/>
    <property type="project" value="GO_Central"/>
</dbReference>
<dbReference type="GO" id="GO:0003729">
    <property type="term" value="F:mRNA binding"/>
    <property type="evidence" value="ECO:0000318"/>
    <property type="project" value="GO_Central"/>
</dbReference>
<dbReference type="GO" id="GO:0003735">
    <property type="term" value="F:structural constituent of ribosome"/>
    <property type="evidence" value="ECO:0000318"/>
    <property type="project" value="GO_Central"/>
</dbReference>
<dbReference type="GO" id="GO:0017148">
    <property type="term" value="P:negative regulation of translation"/>
    <property type="evidence" value="ECO:0000318"/>
    <property type="project" value="GO_Central"/>
</dbReference>
<dbReference type="GO" id="GO:0006412">
    <property type="term" value="P:translation"/>
    <property type="evidence" value="ECO:0007669"/>
    <property type="project" value="UniProtKB-UniRule"/>
</dbReference>
<dbReference type="FunFam" id="3.90.1180.10:FF:000012">
    <property type="entry name" value="50S ribosomal protein L13"/>
    <property type="match status" value="1"/>
</dbReference>
<dbReference type="Gene3D" id="3.90.1180.10">
    <property type="entry name" value="Ribosomal protein L13"/>
    <property type="match status" value="1"/>
</dbReference>
<dbReference type="HAMAP" id="MF_01366">
    <property type="entry name" value="Ribosomal_uL13"/>
    <property type="match status" value="1"/>
</dbReference>
<dbReference type="InterPro" id="IPR005822">
    <property type="entry name" value="Ribosomal_uL13"/>
</dbReference>
<dbReference type="InterPro" id="IPR005823">
    <property type="entry name" value="Ribosomal_uL13_bac-type"/>
</dbReference>
<dbReference type="InterPro" id="IPR023563">
    <property type="entry name" value="Ribosomal_uL13_CS"/>
</dbReference>
<dbReference type="InterPro" id="IPR005755">
    <property type="entry name" value="Ribosomal_uL13_euk/arc"/>
</dbReference>
<dbReference type="InterPro" id="IPR036899">
    <property type="entry name" value="Ribosomal_uL13_sf"/>
</dbReference>
<dbReference type="NCBIfam" id="TIGR01077">
    <property type="entry name" value="L13_A_E"/>
    <property type="match status" value="1"/>
</dbReference>
<dbReference type="NCBIfam" id="NF005004">
    <property type="entry name" value="PRK06394.1"/>
    <property type="match status" value="1"/>
</dbReference>
<dbReference type="PANTHER" id="PTHR11545:SF3">
    <property type="entry name" value="LARGE RIBOSOMAL SUBUNIT PROTEIN UL13"/>
    <property type="match status" value="1"/>
</dbReference>
<dbReference type="PANTHER" id="PTHR11545">
    <property type="entry name" value="RIBOSOMAL PROTEIN L13"/>
    <property type="match status" value="1"/>
</dbReference>
<dbReference type="Pfam" id="PF00572">
    <property type="entry name" value="Ribosomal_L13"/>
    <property type="match status" value="1"/>
</dbReference>
<dbReference type="PIRSF" id="PIRSF002181">
    <property type="entry name" value="Ribosomal_L13"/>
    <property type="match status" value="1"/>
</dbReference>
<dbReference type="SUPFAM" id="SSF52161">
    <property type="entry name" value="Ribosomal protein L13"/>
    <property type="match status" value="1"/>
</dbReference>
<dbReference type="PROSITE" id="PS00783">
    <property type="entry name" value="RIBOSOMAL_L13"/>
    <property type="match status" value="1"/>
</dbReference>
<organism>
    <name type="scientific">Halobacterium salinarum (strain ATCC 700922 / JCM 11081 / NRC-1)</name>
    <name type="common">Halobacterium halobium</name>
    <dbReference type="NCBI Taxonomy" id="64091"/>
    <lineage>
        <taxon>Archaea</taxon>
        <taxon>Methanobacteriati</taxon>
        <taxon>Methanobacteriota</taxon>
        <taxon>Stenosarchaea group</taxon>
        <taxon>Halobacteria</taxon>
        <taxon>Halobacteriales</taxon>
        <taxon>Halobacteriaceae</taxon>
        <taxon>Halobacterium</taxon>
        <taxon>Halobacterium salinarum NRC-34001</taxon>
    </lineage>
</organism>
<name>RL13_HALSA</name>
<proteinExistence type="inferred from homology"/>
<sequence length="145" mass="15894">MSLAEFDADVVVDARDCIMGRVASNVAERALAGDRVAVVNAEQAVITGTEDDVFSTYRTRANLGSDRGPYYPKRPDGIFKRAIRGMLPYKQDDGREALDSVRVYVGNPMDEDGDVLDGTSLDRLSTIRFVTLSEVSEELGANVTW</sequence>
<accession>Q9HQJ3</accession>
<feature type="chain" id="PRO_0000133759" description="Large ribosomal subunit protein uL13">
    <location>
        <begin position="1"/>
        <end position="145"/>
    </location>
</feature>
<gene>
    <name evidence="1" type="primary">rpl13</name>
    <name type="ordered locus">VNG_1138G</name>
</gene>
<keyword id="KW-1185">Reference proteome</keyword>
<keyword id="KW-0687">Ribonucleoprotein</keyword>
<keyword id="KW-0689">Ribosomal protein</keyword>